<proteinExistence type="evidence at transcript level"/>
<name>DADA_ECOL6</name>
<dbReference type="EC" id="1.4.99.-"/>
<dbReference type="EMBL" id="AE014075">
    <property type="protein sequence ID" value="AAN80103.1"/>
    <property type="status" value="ALT_INIT"/>
    <property type="molecule type" value="Genomic_DNA"/>
</dbReference>
<dbReference type="RefSeq" id="WP_001266908.1">
    <property type="nucleotide sequence ID" value="NZ_CP051263.1"/>
</dbReference>
<dbReference type="SMR" id="P0A6J6"/>
<dbReference type="STRING" id="199310.c1638"/>
<dbReference type="GeneID" id="93776243"/>
<dbReference type="KEGG" id="ecc:c1638"/>
<dbReference type="eggNOG" id="COG0665">
    <property type="taxonomic scope" value="Bacteria"/>
</dbReference>
<dbReference type="HOGENOM" id="CLU_007884_9_2_6"/>
<dbReference type="UniPathway" id="UPA00043">
    <property type="reaction ID" value="UER00498"/>
</dbReference>
<dbReference type="Proteomes" id="UP000001410">
    <property type="component" value="Chromosome"/>
</dbReference>
<dbReference type="GO" id="GO:0005737">
    <property type="term" value="C:cytoplasm"/>
    <property type="evidence" value="ECO:0007669"/>
    <property type="project" value="TreeGrafter"/>
</dbReference>
<dbReference type="GO" id="GO:0005886">
    <property type="term" value="C:plasma membrane"/>
    <property type="evidence" value="ECO:0007669"/>
    <property type="project" value="UniProtKB-SubCell"/>
</dbReference>
<dbReference type="GO" id="GO:0008718">
    <property type="term" value="F:D-amino-acid dehydrogenase activity"/>
    <property type="evidence" value="ECO:0007669"/>
    <property type="project" value="UniProtKB-UniRule"/>
</dbReference>
<dbReference type="GO" id="GO:0055130">
    <property type="term" value="P:D-alanine catabolic process"/>
    <property type="evidence" value="ECO:0007669"/>
    <property type="project" value="UniProtKB-UniPathway"/>
</dbReference>
<dbReference type="FunFam" id="3.50.50.60:FF:000020">
    <property type="entry name" value="D-amino acid dehydrogenase"/>
    <property type="match status" value="1"/>
</dbReference>
<dbReference type="Gene3D" id="3.30.9.10">
    <property type="entry name" value="D-Amino Acid Oxidase, subunit A, domain 2"/>
    <property type="match status" value="1"/>
</dbReference>
<dbReference type="Gene3D" id="3.50.50.60">
    <property type="entry name" value="FAD/NAD(P)-binding domain"/>
    <property type="match status" value="2"/>
</dbReference>
<dbReference type="HAMAP" id="MF_01202">
    <property type="entry name" value="DadA"/>
    <property type="match status" value="1"/>
</dbReference>
<dbReference type="InterPro" id="IPR023080">
    <property type="entry name" value="DadA"/>
</dbReference>
<dbReference type="InterPro" id="IPR006076">
    <property type="entry name" value="FAD-dep_OxRdtase"/>
</dbReference>
<dbReference type="InterPro" id="IPR036188">
    <property type="entry name" value="FAD/NAD-bd_sf"/>
</dbReference>
<dbReference type="NCBIfam" id="NF001933">
    <property type="entry name" value="PRK00711.1"/>
    <property type="match status" value="1"/>
</dbReference>
<dbReference type="PANTHER" id="PTHR13847:SF280">
    <property type="entry name" value="D-AMINO ACID DEHYDROGENASE"/>
    <property type="match status" value="1"/>
</dbReference>
<dbReference type="PANTHER" id="PTHR13847">
    <property type="entry name" value="SARCOSINE DEHYDROGENASE-RELATED"/>
    <property type="match status" value="1"/>
</dbReference>
<dbReference type="Pfam" id="PF01266">
    <property type="entry name" value="DAO"/>
    <property type="match status" value="1"/>
</dbReference>
<dbReference type="SUPFAM" id="SSF54373">
    <property type="entry name" value="FAD-linked reductases, C-terminal domain"/>
    <property type="match status" value="1"/>
</dbReference>
<dbReference type="SUPFAM" id="SSF51905">
    <property type="entry name" value="FAD/NAD(P)-binding domain"/>
    <property type="match status" value="1"/>
</dbReference>
<feature type="chain" id="PRO_0000166132" description="D-amino acid dehydrogenase">
    <location>
        <begin position="1"/>
        <end position="432"/>
    </location>
</feature>
<feature type="binding site" evidence="2">
    <location>
        <begin position="3"/>
        <end position="17"/>
    </location>
    <ligand>
        <name>FAD</name>
        <dbReference type="ChEBI" id="CHEBI:57692"/>
    </ligand>
</feature>
<comment type="function">
    <text evidence="1">Oxidative deamination of D-amino acids.</text>
</comment>
<comment type="catalytic activity">
    <reaction>
        <text>a D-alpha-amino acid + A + H2O = a 2-oxocarboxylate + AH2 + NH4(+)</text>
        <dbReference type="Rhea" id="RHEA:18125"/>
        <dbReference type="ChEBI" id="CHEBI:13193"/>
        <dbReference type="ChEBI" id="CHEBI:15377"/>
        <dbReference type="ChEBI" id="CHEBI:17499"/>
        <dbReference type="ChEBI" id="CHEBI:28938"/>
        <dbReference type="ChEBI" id="CHEBI:35179"/>
        <dbReference type="ChEBI" id="CHEBI:59871"/>
    </reaction>
</comment>
<comment type="cofactor">
    <cofactor evidence="1">
        <name>FAD</name>
        <dbReference type="ChEBI" id="CHEBI:57692"/>
    </cofactor>
</comment>
<comment type="pathway">
    <text>Amino-acid degradation; D-alanine degradation; NH(3) and pyruvate from D-alanine: step 1/1.</text>
</comment>
<comment type="subcellular location">
    <subcellularLocation>
        <location evidence="1">Cell inner membrane</location>
        <topology evidence="1">Peripheral membrane protein</topology>
    </subcellularLocation>
</comment>
<comment type="induction">
    <text>By alanine.</text>
</comment>
<comment type="similarity">
    <text evidence="3">Belongs to the DadA oxidoreductase family.</text>
</comment>
<comment type="sequence caution" evidence="3">
    <conflict type="erroneous initiation">
        <sequence resource="EMBL-CDS" id="AAN80103"/>
    </conflict>
</comment>
<gene>
    <name type="primary">dadA</name>
    <name type="synonym">dadR</name>
    <name type="ordered locus">c1638</name>
</gene>
<accession>P0A6J6</accession>
<accession>P29011</accession>
<protein>
    <recommendedName>
        <fullName>D-amino acid dehydrogenase</fullName>
        <ecNumber>1.4.99.-</ecNumber>
    </recommendedName>
</protein>
<reference key="1">
    <citation type="journal article" date="2002" name="Proc. Natl. Acad. Sci. U.S.A.">
        <title>Extensive mosaic structure revealed by the complete genome sequence of uropathogenic Escherichia coli.</title>
        <authorList>
            <person name="Welch R.A."/>
            <person name="Burland V."/>
            <person name="Plunkett G. III"/>
            <person name="Redford P."/>
            <person name="Roesch P."/>
            <person name="Rasko D."/>
            <person name="Buckles E.L."/>
            <person name="Liou S.-R."/>
            <person name="Boutin A."/>
            <person name="Hackett J."/>
            <person name="Stroud D."/>
            <person name="Mayhew G.F."/>
            <person name="Rose D.J."/>
            <person name="Zhou S."/>
            <person name="Schwartz D.C."/>
            <person name="Perna N.T."/>
            <person name="Mobley H.L.T."/>
            <person name="Donnenberg M.S."/>
            <person name="Blattner F.R."/>
        </authorList>
    </citation>
    <scope>NUCLEOTIDE SEQUENCE [LARGE SCALE GENOMIC DNA]</scope>
    <source>
        <strain>CFT073 / ATCC 700928 / UPEC</strain>
    </source>
</reference>
<sequence>MRVVILGSGVVGVASAWYLNQAGHEVTVIDREPGAALETSAANAGQISPGYAAPWAAPGVPLKAIKWMFQRHAPLAVRLDGTQFQLKWMWQMLRNCDTSHYMENKGRMVRLAEYSRDCLKALRAETNIQYEGRQGGTLQLFRTEQQYENATRDIAVLEDAGVPYQLLESSRLAEVEPALAEVAHKLTGGLQLPNDETGDCQLFTQNLARMAEQAGVKFRFNTPVDQLLCDGEQIYGVKCGDEVIKADAYVMAFGSYSTAMLKGIVDIPVYPLKGYSLTIPIAQEDGAPVSTILDETYKIAITRFDNRIRVGGMAEIVGFNTELLQPRRETLEMVVRDLYPRGGHVEQATFWTGLRPMTPDGTPVVGRTRFKNLWLNTGHGTLGWTMACGSGQLLSDLLSGRTPAIPYEDLSVARYSRGFTPSRPGHLHGAHS</sequence>
<evidence type="ECO:0000250" key="1"/>
<evidence type="ECO:0000255" key="2"/>
<evidence type="ECO:0000305" key="3"/>
<keyword id="KW-0997">Cell inner membrane</keyword>
<keyword id="KW-1003">Cell membrane</keyword>
<keyword id="KW-0274">FAD</keyword>
<keyword id="KW-0285">Flavoprotein</keyword>
<keyword id="KW-0472">Membrane</keyword>
<keyword id="KW-0560">Oxidoreductase</keyword>
<keyword id="KW-1185">Reference proteome</keyword>
<organism>
    <name type="scientific">Escherichia coli O6:H1 (strain CFT073 / ATCC 700928 / UPEC)</name>
    <dbReference type="NCBI Taxonomy" id="199310"/>
    <lineage>
        <taxon>Bacteria</taxon>
        <taxon>Pseudomonadati</taxon>
        <taxon>Pseudomonadota</taxon>
        <taxon>Gammaproteobacteria</taxon>
        <taxon>Enterobacterales</taxon>
        <taxon>Enterobacteriaceae</taxon>
        <taxon>Escherichia</taxon>
    </lineage>
</organism>